<accession>Q60SZ2</accession>
<accession>A8XYE1</accession>
<protein>
    <recommendedName>
        <fullName evidence="3">Mitochondrial inner membrane protein Mpv17</fullName>
    </recommendedName>
    <alternativeName>
        <fullName evidence="3">Mpv17-like protein</fullName>
    </alternativeName>
</protein>
<comment type="function">
    <text evidence="1">Involved in mitochondria homeostasis.</text>
</comment>
<comment type="subcellular location">
    <subcellularLocation>
        <location evidence="1">Mitochondrion inner membrane</location>
        <topology evidence="1">Multi-pass membrane protein</topology>
    </subcellularLocation>
</comment>
<comment type="similarity">
    <text evidence="3">Belongs to the peroxisomal membrane protein PXMP2/4 family.</text>
</comment>
<name>MPV17_CAEBR</name>
<sequence length="181" mass="21036">MNLLRTFNATLARRPLATQVIVSGAVCGAGDAFTQYLTGQKSWDYKRTARFTCLAAVFIAPPLNVWFRVLERVRHSNRHAQVFSRMSIDQFMFSPFFNAIILVNLRLLEGFSFSKSVDKMKNDWYDVYTSSLRLWPAVQLINFYFVPLNYRVILIQVVAFFWNSWLSFKTQTPALEDPTIE</sequence>
<organism>
    <name type="scientific">Caenorhabditis briggsae</name>
    <dbReference type="NCBI Taxonomy" id="6238"/>
    <lineage>
        <taxon>Eukaryota</taxon>
        <taxon>Metazoa</taxon>
        <taxon>Ecdysozoa</taxon>
        <taxon>Nematoda</taxon>
        <taxon>Chromadorea</taxon>
        <taxon>Rhabditida</taxon>
        <taxon>Rhabditina</taxon>
        <taxon>Rhabditomorpha</taxon>
        <taxon>Rhabditoidea</taxon>
        <taxon>Rhabditidae</taxon>
        <taxon>Peloderinae</taxon>
        <taxon>Caenorhabditis</taxon>
    </lineage>
</organism>
<feature type="chain" id="PRO_0000234402" description="Mitochondrial inner membrane protein Mpv17">
    <location>
        <begin position="1"/>
        <end position="181" status="greater than"/>
    </location>
</feature>
<feature type="transmembrane region" description="Helical" evidence="2">
    <location>
        <begin position="20"/>
        <end position="38"/>
    </location>
</feature>
<feature type="transmembrane region" description="Helical" evidence="2">
    <location>
        <begin position="48"/>
        <end position="70"/>
    </location>
</feature>
<feature type="transmembrane region" description="Helical" evidence="2">
    <location>
        <begin position="91"/>
        <end position="113"/>
    </location>
</feature>
<feature type="transmembrane region" description="Helical" evidence="2">
    <location>
        <begin position="140"/>
        <end position="162"/>
    </location>
</feature>
<feature type="non-terminal residue">
    <location>
        <position position="181"/>
    </location>
</feature>
<keyword id="KW-0472">Membrane</keyword>
<keyword id="KW-0496">Mitochondrion</keyword>
<keyword id="KW-0999">Mitochondrion inner membrane</keyword>
<keyword id="KW-1185">Reference proteome</keyword>
<keyword id="KW-0812">Transmembrane</keyword>
<keyword id="KW-1133">Transmembrane helix</keyword>
<evidence type="ECO:0000250" key="1"/>
<evidence type="ECO:0000255" key="2"/>
<evidence type="ECO:0000305" key="3"/>
<evidence type="ECO:0000312" key="4">
    <source>
        <dbReference type="WormBase" id="CBG20693"/>
    </source>
</evidence>
<gene>
    <name evidence="4" type="ORF">CBG20693</name>
</gene>
<proteinExistence type="inferred from homology"/>
<dbReference type="EMBL" id="HE600991">
    <property type="protein sequence ID" value="CAP37658.3"/>
    <property type="molecule type" value="Genomic_DNA"/>
</dbReference>
<dbReference type="RefSeq" id="XP_002631527.2">
    <property type="nucleotide sequence ID" value="XM_002631481.2"/>
</dbReference>
<dbReference type="STRING" id="6238.Q60SZ2"/>
<dbReference type="GeneID" id="8573525"/>
<dbReference type="WormBase" id="CBG20693">
    <property type="protein sequence ID" value="CBP11667"/>
    <property type="gene ID" value="WBGene00039629"/>
</dbReference>
<dbReference type="eggNOG" id="KOG1944">
    <property type="taxonomic scope" value="Eukaryota"/>
</dbReference>
<dbReference type="HOGENOM" id="CLU_049109_8_3_1"/>
<dbReference type="InParanoid" id="Q60SZ2"/>
<dbReference type="OMA" id="YKLWPVA"/>
<dbReference type="Proteomes" id="UP000008549">
    <property type="component" value="Unassembled WGS sequence"/>
</dbReference>
<dbReference type="GO" id="GO:0005737">
    <property type="term" value="C:cytoplasm"/>
    <property type="evidence" value="ECO:0000318"/>
    <property type="project" value="GO_Central"/>
</dbReference>
<dbReference type="GO" id="GO:0005743">
    <property type="term" value="C:mitochondrial inner membrane"/>
    <property type="evidence" value="ECO:0007669"/>
    <property type="project" value="UniProtKB-SubCell"/>
</dbReference>
<dbReference type="GO" id="GO:0005739">
    <property type="term" value="C:mitochondrion"/>
    <property type="evidence" value="ECO:0000318"/>
    <property type="project" value="GO_Central"/>
</dbReference>
<dbReference type="GO" id="GO:0015267">
    <property type="term" value="F:channel activity"/>
    <property type="evidence" value="ECO:0000318"/>
    <property type="project" value="GO_Central"/>
</dbReference>
<dbReference type="GO" id="GO:1901858">
    <property type="term" value="P:regulation of mitochondrial DNA metabolic process"/>
    <property type="evidence" value="ECO:0000318"/>
    <property type="project" value="GO_Central"/>
</dbReference>
<dbReference type="InterPro" id="IPR007248">
    <property type="entry name" value="Mpv17_PMP22"/>
</dbReference>
<dbReference type="PANTHER" id="PTHR11266">
    <property type="entry name" value="PEROXISOMAL MEMBRANE PROTEIN 2, PXMP2 MPV17"/>
    <property type="match status" value="1"/>
</dbReference>
<dbReference type="PANTHER" id="PTHR11266:SF17">
    <property type="entry name" value="PROTEIN MPV17"/>
    <property type="match status" value="1"/>
</dbReference>
<dbReference type="Pfam" id="PF04117">
    <property type="entry name" value="Mpv17_PMP22"/>
    <property type="match status" value="1"/>
</dbReference>
<reference key="1">
    <citation type="journal article" date="2003" name="PLoS Biol.">
        <title>The genome sequence of Caenorhabditis briggsae: a platform for comparative genomics.</title>
        <authorList>
            <person name="Stein L.D."/>
            <person name="Bao Z."/>
            <person name="Blasiar D."/>
            <person name="Blumenthal T."/>
            <person name="Brent M.R."/>
            <person name="Chen N."/>
            <person name="Chinwalla A."/>
            <person name="Clarke L."/>
            <person name="Clee C."/>
            <person name="Coghlan A."/>
            <person name="Coulson A."/>
            <person name="D'Eustachio P."/>
            <person name="Fitch D.H.A."/>
            <person name="Fulton L.A."/>
            <person name="Fulton R.E."/>
            <person name="Griffiths-Jones S."/>
            <person name="Harris T.W."/>
            <person name="Hillier L.W."/>
            <person name="Kamath R."/>
            <person name="Kuwabara P.E."/>
            <person name="Mardis E.R."/>
            <person name="Marra M.A."/>
            <person name="Miner T.L."/>
            <person name="Minx P."/>
            <person name="Mullikin J.C."/>
            <person name="Plumb R.W."/>
            <person name="Rogers J."/>
            <person name="Schein J.E."/>
            <person name="Sohrmann M."/>
            <person name="Spieth J."/>
            <person name="Stajich J.E."/>
            <person name="Wei C."/>
            <person name="Willey D."/>
            <person name="Wilson R.K."/>
            <person name="Durbin R.M."/>
            <person name="Waterston R.H."/>
        </authorList>
    </citation>
    <scope>NUCLEOTIDE SEQUENCE [LARGE SCALE GENOMIC DNA]</scope>
    <source>
        <strain>AF16</strain>
    </source>
</reference>